<protein>
    <recommendedName>
        <fullName>E3 ubiquitin-protein transferase MAEA</fullName>
        <ecNumber evidence="3">2.3.2.27</ecNumber>
    </recommendedName>
    <alternativeName>
        <fullName>Macrophage erythroblast attacher</fullName>
    </alternativeName>
</protein>
<proteinExistence type="evidence at transcript level"/>
<accession>Q3MHJ2</accession>
<accession>A7E3P9</accession>
<feature type="chain" id="PRO_0000284935" description="E3 ubiquitin-protein transferase MAEA">
    <location>
        <begin position="1"/>
        <end position="434"/>
    </location>
</feature>
<feature type="domain" description="LisH" evidence="5">
    <location>
        <begin position="121"/>
        <end position="153"/>
    </location>
</feature>
<feature type="domain" description="CTLH" evidence="4">
    <location>
        <begin position="159"/>
        <end position="254"/>
    </location>
</feature>
<feature type="zinc finger region" description="RING-Gid-type" evidence="6">
    <location>
        <begin position="352"/>
        <end position="419"/>
    </location>
</feature>
<feature type="region of interest" description="Extracellular and involved in cell to cell contact" evidence="3">
    <location>
        <begin position="1"/>
        <end position="124"/>
    </location>
</feature>
<feature type="region of interest" description="Disordered" evidence="7">
    <location>
        <begin position="190"/>
        <end position="222"/>
    </location>
</feature>
<feature type="site" description="Essential for ubiquitin ligase activity" evidence="1">
    <location>
        <position position="352"/>
    </location>
</feature>
<feature type="modified residue" description="Phosphothreonine" evidence="3">
    <location>
        <position position="28"/>
    </location>
</feature>
<dbReference type="EC" id="2.3.2.27" evidence="3"/>
<dbReference type="EMBL" id="BT030670">
    <property type="protein sequence ID" value="ABS44986.1"/>
    <property type="molecule type" value="mRNA"/>
</dbReference>
<dbReference type="EMBL" id="BC105218">
    <property type="protein sequence ID" value="AAI05219.1"/>
    <property type="molecule type" value="mRNA"/>
</dbReference>
<dbReference type="RefSeq" id="NP_001029587.1">
    <property type="nucleotide sequence ID" value="NM_001034415.1"/>
</dbReference>
<dbReference type="SMR" id="Q3MHJ2"/>
<dbReference type="FunCoup" id="Q3MHJ2">
    <property type="interactions" value="4074"/>
</dbReference>
<dbReference type="STRING" id="9913.ENSBTAP00000016693"/>
<dbReference type="PaxDb" id="9913-ENSBTAP00000016693"/>
<dbReference type="Ensembl" id="ENSBTAT00000016693.7">
    <property type="protein sequence ID" value="ENSBTAP00000016693.6"/>
    <property type="gene ID" value="ENSBTAG00000012575.7"/>
</dbReference>
<dbReference type="GeneID" id="511956"/>
<dbReference type="KEGG" id="bta:511956"/>
<dbReference type="CTD" id="10296"/>
<dbReference type="VEuPathDB" id="HostDB:ENSBTAG00000012575"/>
<dbReference type="VGNC" id="VGNC:31135">
    <property type="gene designation" value="MAEA"/>
</dbReference>
<dbReference type="eggNOG" id="KOG0396">
    <property type="taxonomic scope" value="Eukaryota"/>
</dbReference>
<dbReference type="GeneTree" id="ENSGT00940000153203"/>
<dbReference type="InParanoid" id="Q3MHJ2"/>
<dbReference type="OrthoDB" id="1933455at2759"/>
<dbReference type="Reactome" id="R-BTA-9861718">
    <property type="pathway name" value="Regulation of pyruvate metabolism"/>
</dbReference>
<dbReference type="Proteomes" id="UP000009136">
    <property type="component" value="Chromosome 6"/>
</dbReference>
<dbReference type="Bgee" id="ENSBTAG00000012575">
    <property type="expression patterns" value="Expressed in neutrophil and 105 other cell types or tissues"/>
</dbReference>
<dbReference type="GO" id="GO:0005737">
    <property type="term" value="C:cytoplasm"/>
    <property type="evidence" value="ECO:0000318"/>
    <property type="project" value="GO_Central"/>
</dbReference>
<dbReference type="GO" id="GO:0005856">
    <property type="term" value="C:cytoskeleton"/>
    <property type="evidence" value="ECO:0007669"/>
    <property type="project" value="UniProtKB-SubCell"/>
</dbReference>
<dbReference type="GO" id="GO:0034657">
    <property type="term" value="C:GID complex"/>
    <property type="evidence" value="ECO:0000318"/>
    <property type="project" value="GO_Central"/>
</dbReference>
<dbReference type="GO" id="GO:0016363">
    <property type="term" value="C:nuclear matrix"/>
    <property type="evidence" value="ECO:0007669"/>
    <property type="project" value="UniProtKB-SubCell"/>
</dbReference>
<dbReference type="GO" id="GO:0005654">
    <property type="term" value="C:nucleoplasm"/>
    <property type="evidence" value="ECO:0000250"/>
    <property type="project" value="UniProtKB"/>
</dbReference>
<dbReference type="GO" id="GO:0005634">
    <property type="term" value="C:nucleus"/>
    <property type="evidence" value="ECO:0000318"/>
    <property type="project" value="GO_Central"/>
</dbReference>
<dbReference type="GO" id="GO:0005886">
    <property type="term" value="C:plasma membrane"/>
    <property type="evidence" value="ECO:0007669"/>
    <property type="project" value="UniProtKB-SubCell"/>
</dbReference>
<dbReference type="GO" id="GO:0003779">
    <property type="term" value="F:actin binding"/>
    <property type="evidence" value="ECO:0007669"/>
    <property type="project" value="UniProtKB-KW"/>
</dbReference>
<dbReference type="GO" id="GO:0061630">
    <property type="term" value="F:ubiquitin protein ligase activity"/>
    <property type="evidence" value="ECO:0007669"/>
    <property type="project" value="InterPro"/>
</dbReference>
<dbReference type="GO" id="GO:0008270">
    <property type="term" value="F:zinc ion binding"/>
    <property type="evidence" value="ECO:0007669"/>
    <property type="project" value="UniProtKB-KW"/>
</dbReference>
<dbReference type="GO" id="GO:0051301">
    <property type="term" value="P:cell division"/>
    <property type="evidence" value="ECO:0007669"/>
    <property type="project" value="UniProtKB-KW"/>
</dbReference>
<dbReference type="GO" id="GO:0043249">
    <property type="term" value="P:erythrocyte maturation"/>
    <property type="evidence" value="ECO:0007669"/>
    <property type="project" value="UniProtKB-KW"/>
</dbReference>
<dbReference type="GO" id="GO:0043161">
    <property type="term" value="P:proteasome-mediated ubiquitin-dependent protein catabolic process"/>
    <property type="evidence" value="ECO:0000318"/>
    <property type="project" value="GO_Central"/>
</dbReference>
<dbReference type="CDD" id="cd16659">
    <property type="entry name" value="RING-Ubox_Emp"/>
    <property type="match status" value="1"/>
</dbReference>
<dbReference type="InterPro" id="IPR013144">
    <property type="entry name" value="CRA_dom"/>
</dbReference>
<dbReference type="InterPro" id="IPR024964">
    <property type="entry name" value="CTLH/CRA"/>
</dbReference>
<dbReference type="InterPro" id="IPR006595">
    <property type="entry name" value="CTLH_C"/>
</dbReference>
<dbReference type="InterPro" id="IPR045098">
    <property type="entry name" value="Fyv10_fam"/>
</dbReference>
<dbReference type="InterPro" id="IPR006594">
    <property type="entry name" value="LisH"/>
</dbReference>
<dbReference type="InterPro" id="IPR044063">
    <property type="entry name" value="ZF_RING_GID"/>
</dbReference>
<dbReference type="PANTHER" id="PTHR12170:SF2">
    <property type="entry name" value="E3 UBIQUITIN-PROTEIN TRANSFERASE MAEA"/>
    <property type="match status" value="1"/>
</dbReference>
<dbReference type="PANTHER" id="PTHR12170">
    <property type="entry name" value="MACROPHAGE ERYTHROBLAST ATTACHER-RELATED"/>
    <property type="match status" value="1"/>
</dbReference>
<dbReference type="Pfam" id="PF10607">
    <property type="entry name" value="CTLH"/>
    <property type="match status" value="1"/>
</dbReference>
<dbReference type="SMART" id="SM00757">
    <property type="entry name" value="CRA"/>
    <property type="match status" value="1"/>
</dbReference>
<dbReference type="SMART" id="SM00668">
    <property type="entry name" value="CTLH"/>
    <property type="match status" value="1"/>
</dbReference>
<dbReference type="SMART" id="SM00667">
    <property type="entry name" value="LisH"/>
    <property type="match status" value="1"/>
</dbReference>
<dbReference type="SUPFAM" id="SSF57850">
    <property type="entry name" value="RING/U-box"/>
    <property type="match status" value="1"/>
</dbReference>
<dbReference type="PROSITE" id="PS50897">
    <property type="entry name" value="CTLH"/>
    <property type="match status" value="1"/>
</dbReference>
<dbReference type="PROSITE" id="PS50896">
    <property type="entry name" value="LISH"/>
    <property type="match status" value="1"/>
</dbReference>
<dbReference type="PROSITE" id="PS51867">
    <property type="entry name" value="ZF_RING_GID"/>
    <property type="match status" value="1"/>
</dbReference>
<reference key="1">
    <citation type="journal article" date="2005" name="BMC Genomics">
        <title>Characterization of 954 bovine full-CDS cDNA sequences.</title>
        <authorList>
            <person name="Harhay G.P."/>
            <person name="Sonstegard T.S."/>
            <person name="Keele J.W."/>
            <person name="Heaton M.P."/>
            <person name="Clawson M.L."/>
            <person name="Snelling W.M."/>
            <person name="Wiedmann R.T."/>
            <person name="Van Tassell C.P."/>
            <person name="Smith T.P.L."/>
        </authorList>
    </citation>
    <scope>NUCLEOTIDE SEQUENCE [LARGE SCALE MRNA]</scope>
</reference>
<reference key="2">
    <citation type="submission" date="2005-09" db="EMBL/GenBank/DDBJ databases">
        <authorList>
            <consortium name="NIH - Mammalian Gene Collection (MGC) project"/>
        </authorList>
    </citation>
    <scope>NUCLEOTIDE SEQUENCE [LARGE SCALE MRNA]</scope>
    <source>
        <strain>Hereford</strain>
        <tissue>Thymus</tissue>
    </source>
</reference>
<gene>
    <name type="primary">MAEA</name>
</gene>
<organism>
    <name type="scientific">Bos taurus</name>
    <name type="common">Bovine</name>
    <dbReference type="NCBI Taxonomy" id="9913"/>
    <lineage>
        <taxon>Eukaryota</taxon>
        <taxon>Metazoa</taxon>
        <taxon>Chordata</taxon>
        <taxon>Craniata</taxon>
        <taxon>Vertebrata</taxon>
        <taxon>Euteleostomi</taxon>
        <taxon>Mammalia</taxon>
        <taxon>Eutheria</taxon>
        <taxon>Laurasiatheria</taxon>
        <taxon>Artiodactyla</taxon>
        <taxon>Ruminantia</taxon>
        <taxon>Pecora</taxon>
        <taxon>Bovidae</taxon>
        <taxon>Bovinae</taxon>
        <taxon>Bos</taxon>
    </lineage>
</organism>
<keyword id="KW-0009">Actin-binding</keyword>
<keyword id="KW-0131">Cell cycle</keyword>
<keyword id="KW-0132">Cell division</keyword>
<keyword id="KW-1003">Cell membrane</keyword>
<keyword id="KW-0963">Cytoplasm</keyword>
<keyword id="KW-0206">Cytoskeleton</keyword>
<keyword id="KW-0265">Erythrocyte maturation</keyword>
<keyword id="KW-0472">Membrane</keyword>
<keyword id="KW-0479">Metal-binding</keyword>
<keyword id="KW-0539">Nucleus</keyword>
<keyword id="KW-0597">Phosphoprotein</keyword>
<keyword id="KW-1185">Reference proteome</keyword>
<keyword id="KW-0808">Transferase</keyword>
<keyword id="KW-0832">Ubl conjugation</keyword>
<keyword id="KW-0833">Ubl conjugation pathway</keyword>
<keyword id="KW-0862">Zinc</keyword>
<keyword id="KW-0863">Zinc-finger</keyword>
<evidence type="ECO:0000250" key="1">
    <source>
        <dbReference type="UniProtKB" id="P40492"/>
    </source>
</evidence>
<evidence type="ECO:0000250" key="2">
    <source>
        <dbReference type="UniProtKB" id="Q4VC33"/>
    </source>
</evidence>
<evidence type="ECO:0000250" key="3">
    <source>
        <dbReference type="UniProtKB" id="Q7L5Y9"/>
    </source>
</evidence>
<evidence type="ECO:0000255" key="4">
    <source>
        <dbReference type="PROSITE-ProRule" id="PRU00058"/>
    </source>
</evidence>
<evidence type="ECO:0000255" key="5">
    <source>
        <dbReference type="PROSITE-ProRule" id="PRU00126"/>
    </source>
</evidence>
<evidence type="ECO:0000255" key="6">
    <source>
        <dbReference type="PROSITE-ProRule" id="PRU01215"/>
    </source>
</evidence>
<evidence type="ECO:0000256" key="7">
    <source>
        <dbReference type="SAM" id="MobiDB-lite"/>
    </source>
</evidence>
<comment type="function">
    <text evidence="2 3">Core component of the CTLH E3 ubiquitin-protein ligase complex that selectively accepts ubiquitin from UBE2H and mediates ubiquitination and subsequent proteasomal degradation of the transcription factor HBP1. MAEA and RMND5A are both required for catalytic activity of the CTLH E3 ubiquitin-protein ligase complex. MAEA is required for normal cell proliferation. The CTLH E3 ubiquitin-protein ligase complex is not required for the degradation of enzymes involved in gluconeogenesis, such as FBP1 (By similarity). Plays a role in erythroblast enucleation during erythrocyte maturation and in the development of mature macrophages (By similarity). Mediates the attachment of erythroid cell to mature macrophages; this MAEA-mediated contact inhibits erythroid cell apoptosis (By similarity). Participates in erythroblastic island formation, which is the functional unit of definitive erythropoiesis. Associates with F-actin to regulate actin distribution in erythroblasts and macrophages (By similarity). May contribute to nuclear architecture and cells division events (By similarity).</text>
</comment>
<comment type="catalytic activity">
    <reaction evidence="3">
        <text>S-ubiquitinyl-[E2 ubiquitin-conjugating enzyme]-L-cysteine + [acceptor protein]-L-lysine = [E2 ubiquitin-conjugating enzyme]-L-cysteine + N(6)-ubiquitinyl-[acceptor protein]-L-lysine.</text>
        <dbReference type="EC" id="2.3.2.27"/>
    </reaction>
</comment>
<comment type="subunit">
    <text evidence="3">Identified in the CTLH complex that contains GID4, RANBP9 and/or RANBP10, MKLN1, MAEA, RMND5A (or alternatively its paralog RMND5B), GID8, ARMC8, WDR26 and YPEL5. Within this complex, MAEA, RMND5A (or alternatively its paralog RMND5B), GID8, WDR26, and RANBP9 and/or RANBP10 form the catalytic core, while GID4, MKLN1, ARMC8 and YPEL5 have ancillary roles. Interacts with F-actin.</text>
</comment>
<comment type="subcellular location">
    <subcellularLocation>
        <location evidence="2">Cytoplasm</location>
    </subcellularLocation>
    <subcellularLocation>
        <location evidence="3">Nucleus</location>
        <location evidence="3">Nucleoplasm</location>
    </subcellularLocation>
    <subcellularLocation>
        <location evidence="2">Nucleus matrix</location>
    </subcellularLocation>
    <subcellularLocation>
        <location evidence="2">Cell membrane</location>
    </subcellularLocation>
    <subcellularLocation>
        <location evidence="2">Cytoplasm</location>
        <location evidence="2">Cytoskeleton</location>
    </subcellularLocation>
    <text evidence="2 3">Detected in a nuclear, speckled-like pattern (By similarity). Localized with condensed chromatin at prophase; Detected in nuclear spindle poles at metaphase and in the contractile ring during telophase and cytokinesis (By similarity). Present in cytoplasm, nuclear matrix and at the cell surface in macrophages; predominantly nuclear in immature macrophages and predominantly detected at the cell surface in mature macrophages. Colocalizes with F-actin in macrophages (By similarity).</text>
</comment>
<comment type="domain">
    <text evidence="3">The expected RING-type zinc finger domain is highly divergent and most of the expected Cys residues are not conserved. Still, the protein is required for CTLH complex E3 ubiquitin-protein transferase activity. In addition, the conserved Cys-352 in this highly divergent region is required for ubiquitination by the yeast GID complex, suggesting a direct role in catalyzing ubiquitination.</text>
</comment>
<comment type="PTM">
    <text evidence="3">Autoubiquitinated as component of the CTLH E3 ubiquitin-protein ligase complex (in vitro).</text>
</comment>
<name>MAEA_BOVIN</name>
<sequence length="434" mass="49396">MAVQESAAQLSMTLKVQEYPTLKVPYETLNKRFRAAQKNIDRETSHVTMVVAELEKTLSGCPAVDSVVSLLDGVVEKLSVLKRKAVESIQAEDESAKLCKRRIEHLKEHSSDQPAAASVWKRKRMDRMMVEHLLRCGYYNTAVKLARQSGIEDLVNIEMFLTAKEVEESLERRETATCLAWCHDNKSRLRKMKGRQSEHDAKTGRKSRVASGSPKESEDLGMETIKGKPELSCLEFSLRIQEFIELIRQNKRLDAVRHARKHFSQAEGSQLDEVRQVMGMLAFPPDTHISPYKDLLDPARWRMLIQQFRYDNYRLHQLGNSSVFTLTLQAGLSAIKTPQCYKEDGSSRSPDCPVCSRSLNKLAQPLPMAHCANSRLVCKISGDVMNENNPPMMLPNGYVYGYNSLLSIRQDDKVVCPRTKEVFHFSQAEKVYIM</sequence>